<evidence type="ECO:0000255" key="1">
    <source>
        <dbReference type="HAMAP-Rule" id="MF_00009"/>
    </source>
</evidence>
<sequence>MYIEMVDETGQVSKEMLQQTQEILEFAAQKLGKEDKEMAVTFVTNERSHELNLEYRDTDRPTDVISLEYKPELEIAFDEEDLLENPELAEMMSEFDAYIGELFISIDKAHEQAEEYGHSFEREMGFLAVHGFLHINGYDHYTPEEEAEMFGLQEEILTAYGLTRQ</sequence>
<protein>
    <recommendedName>
        <fullName evidence="1">Endoribonuclease YbeY</fullName>
        <ecNumber evidence="1">3.1.-.-</ecNumber>
    </recommendedName>
</protein>
<comment type="function">
    <text evidence="1">Single strand-specific metallo-endoribonuclease involved in late-stage 70S ribosome quality control and in maturation of the 3' terminus of the 16S rRNA.</text>
</comment>
<comment type="cofactor">
    <cofactor evidence="1">
        <name>Zn(2+)</name>
        <dbReference type="ChEBI" id="CHEBI:29105"/>
    </cofactor>
    <text evidence="1">Binds 1 zinc ion.</text>
</comment>
<comment type="subcellular location">
    <subcellularLocation>
        <location evidence="1">Cytoplasm</location>
    </subcellularLocation>
</comment>
<comment type="similarity">
    <text evidence="1">Belongs to the endoribonuclease YbeY family.</text>
</comment>
<proteinExistence type="inferred from homology"/>
<accession>Q8DQ35</accession>
<gene>
    <name evidence="1" type="primary">ybeY</name>
    <name type="ordered locus">spr0869</name>
</gene>
<keyword id="KW-0963">Cytoplasm</keyword>
<keyword id="KW-0255">Endonuclease</keyword>
<keyword id="KW-0378">Hydrolase</keyword>
<keyword id="KW-0479">Metal-binding</keyword>
<keyword id="KW-0540">Nuclease</keyword>
<keyword id="KW-1185">Reference proteome</keyword>
<keyword id="KW-0690">Ribosome biogenesis</keyword>
<keyword id="KW-0698">rRNA processing</keyword>
<keyword id="KW-0862">Zinc</keyword>
<organism>
    <name type="scientific">Streptococcus pneumoniae (strain ATCC BAA-255 / R6)</name>
    <dbReference type="NCBI Taxonomy" id="171101"/>
    <lineage>
        <taxon>Bacteria</taxon>
        <taxon>Bacillati</taxon>
        <taxon>Bacillota</taxon>
        <taxon>Bacilli</taxon>
        <taxon>Lactobacillales</taxon>
        <taxon>Streptococcaceae</taxon>
        <taxon>Streptococcus</taxon>
    </lineage>
</organism>
<feature type="chain" id="PRO_0000102541" description="Endoribonuclease YbeY">
    <location>
        <begin position="1"/>
        <end position="165"/>
    </location>
</feature>
<feature type="binding site" evidence="1">
    <location>
        <position position="130"/>
    </location>
    <ligand>
        <name>Zn(2+)</name>
        <dbReference type="ChEBI" id="CHEBI:29105"/>
        <note>catalytic</note>
    </ligand>
</feature>
<feature type="binding site" evidence="1">
    <location>
        <position position="134"/>
    </location>
    <ligand>
        <name>Zn(2+)</name>
        <dbReference type="ChEBI" id="CHEBI:29105"/>
        <note>catalytic</note>
    </ligand>
</feature>
<feature type="binding site" evidence="1">
    <location>
        <position position="140"/>
    </location>
    <ligand>
        <name>Zn(2+)</name>
        <dbReference type="ChEBI" id="CHEBI:29105"/>
        <note>catalytic</note>
    </ligand>
</feature>
<name>YBEY_STRR6</name>
<reference key="1">
    <citation type="journal article" date="2001" name="J. Bacteriol.">
        <title>Genome of the bacterium Streptococcus pneumoniae strain R6.</title>
        <authorList>
            <person name="Hoskins J."/>
            <person name="Alborn W.E. Jr."/>
            <person name="Arnold J."/>
            <person name="Blaszczak L.C."/>
            <person name="Burgett S."/>
            <person name="DeHoff B.S."/>
            <person name="Estrem S.T."/>
            <person name="Fritz L."/>
            <person name="Fu D.-J."/>
            <person name="Fuller W."/>
            <person name="Geringer C."/>
            <person name="Gilmour R."/>
            <person name="Glass J.S."/>
            <person name="Khoja H."/>
            <person name="Kraft A.R."/>
            <person name="Lagace R.E."/>
            <person name="LeBlanc D.J."/>
            <person name="Lee L.N."/>
            <person name="Lefkowitz E.J."/>
            <person name="Lu J."/>
            <person name="Matsushima P."/>
            <person name="McAhren S.M."/>
            <person name="McHenney M."/>
            <person name="McLeaster K."/>
            <person name="Mundy C.W."/>
            <person name="Nicas T.I."/>
            <person name="Norris F.H."/>
            <person name="O'Gara M."/>
            <person name="Peery R.B."/>
            <person name="Robertson G.T."/>
            <person name="Rockey P."/>
            <person name="Sun P.-M."/>
            <person name="Winkler M.E."/>
            <person name="Yang Y."/>
            <person name="Young-Bellido M."/>
            <person name="Zhao G."/>
            <person name="Zook C.A."/>
            <person name="Baltz R.H."/>
            <person name="Jaskunas S.R."/>
            <person name="Rosteck P.R. Jr."/>
            <person name="Skatrud P.L."/>
            <person name="Glass J.I."/>
        </authorList>
    </citation>
    <scope>NUCLEOTIDE SEQUENCE [LARGE SCALE GENOMIC DNA]</scope>
    <source>
        <strain>ATCC BAA-255 / R6</strain>
    </source>
</reference>
<dbReference type="EC" id="3.1.-.-" evidence="1"/>
<dbReference type="EMBL" id="AE007317">
    <property type="protein sequence ID" value="AAK99673.1"/>
    <property type="molecule type" value="Genomic_DNA"/>
</dbReference>
<dbReference type="PIR" id="E97980">
    <property type="entry name" value="E97980"/>
</dbReference>
<dbReference type="RefSeq" id="NP_358463.1">
    <property type="nucleotide sequence ID" value="NC_003098.1"/>
</dbReference>
<dbReference type="RefSeq" id="WP_000275156.1">
    <property type="nucleotide sequence ID" value="NC_003098.1"/>
</dbReference>
<dbReference type="SMR" id="Q8DQ35"/>
<dbReference type="STRING" id="171101.spr0869"/>
<dbReference type="GeneID" id="93739770"/>
<dbReference type="KEGG" id="spr:spr0869"/>
<dbReference type="PATRIC" id="fig|171101.6.peg.957"/>
<dbReference type="eggNOG" id="COG0319">
    <property type="taxonomic scope" value="Bacteria"/>
</dbReference>
<dbReference type="HOGENOM" id="CLU_106710_3_0_9"/>
<dbReference type="Proteomes" id="UP000000586">
    <property type="component" value="Chromosome"/>
</dbReference>
<dbReference type="GO" id="GO:0005737">
    <property type="term" value="C:cytoplasm"/>
    <property type="evidence" value="ECO:0007669"/>
    <property type="project" value="UniProtKB-SubCell"/>
</dbReference>
<dbReference type="GO" id="GO:0004222">
    <property type="term" value="F:metalloendopeptidase activity"/>
    <property type="evidence" value="ECO:0007669"/>
    <property type="project" value="InterPro"/>
</dbReference>
<dbReference type="GO" id="GO:0004521">
    <property type="term" value="F:RNA endonuclease activity"/>
    <property type="evidence" value="ECO:0007669"/>
    <property type="project" value="UniProtKB-UniRule"/>
</dbReference>
<dbReference type="GO" id="GO:0008270">
    <property type="term" value="F:zinc ion binding"/>
    <property type="evidence" value="ECO:0007669"/>
    <property type="project" value="UniProtKB-UniRule"/>
</dbReference>
<dbReference type="GO" id="GO:0006364">
    <property type="term" value="P:rRNA processing"/>
    <property type="evidence" value="ECO:0007669"/>
    <property type="project" value="UniProtKB-UniRule"/>
</dbReference>
<dbReference type="Gene3D" id="3.40.390.30">
    <property type="entry name" value="Metalloproteases ('zincins'), catalytic domain"/>
    <property type="match status" value="1"/>
</dbReference>
<dbReference type="HAMAP" id="MF_00009">
    <property type="entry name" value="Endoribonucl_YbeY"/>
    <property type="match status" value="1"/>
</dbReference>
<dbReference type="InterPro" id="IPR023091">
    <property type="entry name" value="MetalPrtase_cat_dom_sf_prd"/>
</dbReference>
<dbReference type="InterPro" id="IPR002036">
    <property type="entry name" value="YbeY"/>
</dbReference>
<dbReference type="InterPro" id="IPR020549">
    <property type="entry name" value="YbeY_CS"/>
</dbReference>
<dbReference type="NCBIfam" id="TIGR00043">
    <property type="entry name" value="rRNA maturation RNase YbeY"/>
    <property type="match status" value="1"/>
</dbReference>
<dbReference type="PANTHER" id="PTHR46986">
    <property type="entry name" value="ENDORIBONUCLEASE YBEY, CHLOROPLASTIC"/>
    <property type="match status" value="1"/>
</dbReference>
<dbReference type="PANTHER" id="PTHR46986:SF1">
    <property type="entry name" value="ENDORIBONUCLEASE YBEY, CHLOROPLASTIC"/>
    <property type="match status" value="1"/>
</dbReference>
<dbReference type="Pfam" id="PF02130">
    <property type="entry name" value="YbeY"/>
    <property type="match status" value="1"/>
</dbReference>
<dbReference type="SUPFAM" id="SSF55486">
    <property type="entry name" value="Metalloproteases ('zincins'), catalytic domain"/>
    <property type="match status" value="1"/>
</dbReference>
<dbReference type="PROSITE" id="PS01306">
    <property type="entry name" value="UPF0054"/>
    <property type="match status" value="1"/>
</dbReference>